<evidence type="ECO:0000250" key="1">
    <source>
        <dbReference type="UniProtKB" id="Q9CR11"/>
    </source>
</evidence>
<evidence type="ECO:0000255" key="2"/>
<evidence type="ECO:0000255" key="3">
    <source>
        <dbReference type="PROSITE-ProRule" id="PRU00376"/>
    </source>
</evidence>
<evidence type="ECO:0000269" key="4">
    <source>
    </source>
</evidence>
<evidence type="ECO:0000269" key="5">
    <source>
    </source>
</evidence>
<evidence type="ECO:0000269" key="6">
    <source>
    </source>
</evidence>
<evidence type="ECO:0000269" key="7">
    <source>
    </source>
</evidence>
<evidence type="ECO:0000269" key="8">
    <source>
    </source>
</evidence>
<evidence type="ECO:0000269" key="9">
    <source>
    </source>
</evidence>
<evidence type="ECO:0000269" key="10">
    <source>
    </source>
</evidence>
<evidence type="ECO:0000269" key="11">
    <source>
    </source>
</evidence>
<evidence type="ECO:0000269" key="12">
    <source>
    </source>
</evidence>
<evidence type="ECO:0000269" key="13">
    <source>
    </source>
</evidence>
<evidence type="ECO:0000269" key="14">
    <source>
    </source>
</evidence>
<evidence type="ECO:0000303" key="15">
    <source>
    </source>
</evidence>
<evidence type="ECO:0000305" key="16"/>
<evidence type="ECO:0000312" key="17">
    <source>
        <dbReference type="HGNC" id="HGNC:24859"/>
    </source>
</evidence>
<evidence type="ECO:0007744" key="18">
    <source>
        <dbReference type="PDB" id="5VNA"/>
    </source>
</evidence>
<evidence type="ECO:0007744" key="19">
    <source>
        <dbReference type="PDB" id="5VNB"/>
    </source>
</evidence>
<evidence type="ECO:0007744" key="20">
    <source>
        <dbReference type="PDB" id="5XTZ"/>
    </source>
</evidence>
<evidence type="ECO:0007744" key="21">
    <source>
        <dbReference type="PDB" id="5Y8V"/>
    </source>
</evidence>
<evidence type="ECO:0007744" key="22">
    <source>
    </source>
</evidence>
<evidence type="ECO:0007829" key="23">
    <source>
        <dbReference type="PDB" id="5R69"/>
    </source>
</evidence>
<evidence type="ECO:0007829" key="24">
    <source>
        <dbReference type="PDB" id="8IIZ"/>
    </source>
</evidence>
<evidence type="ECO:0007829" key="25">
    <source>
        <dbReference type="PDB" id="8IJ0"/>
    </source>
</evidence>
<dbReference type="EMBL" id="U61384">
    <property type="protein sequence ID" value="AAD12188.1"/>
    <property type="molecule type" value="mRNA"/>
</dbReference>
<dbReference type="EMBL" id="AJ245746">
    <property type="protein sequence ID" value="CAC01935.1"/>
    <property type="status" value="ALT_INIT"/>
    <property type="molecule type" value="mRNA"/>
</dbReference>
<dbReference type="EMBL" id="AK001413">
    <property type="protein sequence ID" value="BAA91678.1"/>
    <property type="molecule type" value="mRNA"/>
</dbReference>
<dbReference type="EMBL" id="BC000994">
    <property type="protein sequence ID" value="AAH00994.1"/>
    <property type="molecule type" value="mRNA"/>
</dbReference>
<dbReference type="CCDS" id="CCDS8990.1"/>
<dbReference type="RefSeq" id="NP_001287879.1">
    <property type="nucleotide sequence ID" value="NM_001300950.1"/>
</dbReference>
<dbReference type="RefSeq" id="NP_006521.1">
    <property type="nucleotide sequence ID" value="NM_006530.4"/>
</dbReference>
<dbReference type="PDB" id="5R68">
    <property type="method" value="X-ray"/>
    <property type="resolution" value="1.64 A"/>
    <property type="chains" value="A/B=18-190"/>
</dbReference>
<dbReference type="PDB" id="5R69">
    <property type="method" value="X-ray"/>
    <property type="resolution" value="1.83 A"/>
    <property type="chains" value="A/B=18-190"/>
</dbReference>
<dbReference type="PDB" id="5VNA">
    <property type="method" value="X-ray"/>
    <property type="resolution" value="2.10 A"/>
    <property type="chains" value="A/B/C/D=1-148"/>
</dbReference>
<dbReference type="PDB" id="5VNB">
    <property type="method" value="X-ray"/>
    <property type="resolution" value="2.40 A"/>
    <property type="chains" value="A/B/C/D=1-148"/>
</dbReference>
<dbReference type="PDB" id="5XTZ">
    <property type="method" value="X-ray"/>
    <property type="resolution" value="2.10 A"/>
    <property type="chains" value="A/B/C/D=15-159"/>
</dbReference>
<dbReference type="PDB" id="5Y8V">
    <property type="method" value="X-ray"/>
    <property type="resolution" value="2.61 A"/>
    <property type="chains" value="A/B/C/D=21-160"/>
</dbReference>
<dbReference type="PDB" id="7EIF">
    <property type="method" value="X-ray"/>
    <property type="resolution" value="1.58 A"/>
    <property type="chains" value="A=19-159"/>
</dbReference>
<dbReference type="PDB" id="7JFY">
    <property type="method" value="X-ray"/>
    <property type="resolution" value="2.10 A"/>
    <property type="chains" value="A/B/C/D=1-148"/>
</dbReference>
<dbReference type="PDB" id="8DKB">
    <property type="method" value="X-ray"/>
    <property type="resolution" value="2.58 A"/>
    <property type="chains" value="A/B/C/D/E/F/G/H=1-149"/>
</dbReference>
<dbReference type="PDB" id="8I60">
    <property type="method" value="X-ray"/>
    <property type="resolution" value="2.30 A"/>
    <property type="chains" value="C/D=11-150"/>
</dbReference>
<dbReference type="PDB" id="8IIY">
    <property type="method" value="X-ray"/>
    <property type="resolution" value="2.15 A"/>
    <property type="chains" value="A=19-159"/>
</dbReference>
<dbReference type="PDB" id="8IIZ">
    <property type="method" value="X-ray"/>
    <property type="resolution" value="2.10 A"/>
    <property type="chains" value="A=19-159"/>
</dbReference>
<dbReference type="PDB" id="8IJ0">
    <property type="method" value="X-ray"/>
    <property type="resolution" value="1.52 A"/>
    <property type="chains" value="A/B=19-159"/>
</dbReference>
<dbReference type="PDB" id="8X15">
    <property type="method" value="EM"/>
    <property type="resolution" value="3.20 A"/>
    <property type="chains" value="W=1-227"/>
</dbReference>
<dbReference type="PDB" id="8X19">
    <property type="method" value="EM"/>
    <property type="resolution" value="3.20 A"/>
    <property type="chains" value="W=1-227"/>
</dbReference>
<dbReference type="PDB" id="8X1C">
    <property type="method" value="EM"/>
    <property type="resolution" value="3.20 A"/>
    <property type="chains" value="W=1-227"/>
</dbReference>
<dbReference type="PDBsum" id="5R68"/>
<dbReference type="PDBsum" id="5R69"/>
<dbReference type="PDBsum" id="5VNA"/>
<dbReference type="PDBsum" id="5VNB"/>
<dbReference type="PDBsum" id="5XTZ"/>
<dbReference type="PDBsum" id="5Y8V"/>
<dbReference type="PDBsum" id="7EIF"/>
<dbReference type="PDBsum" id="7JFY"/>
<dbReference type="PDBsum" id="8DKB"/>
<dbReference type="PDBsum" id="8I60"/>
<dbReference type="PDBsum" id="8IIY"/>
<dbReference type="PDBsum" id="8IIZ"/>
<dbReference type="PDBsum" id="8IJ0"/>
<dbReference type="PDBsum" id="8X15"/>
<dbReference type="PDBsum" id="8X19"/>
<dbReference type="PDBsum" id="8X1C"/>
<dbReference type="EMDB" id="EMD-37984"/>
<dbReference type="EMDB" id="EMD-37988"/>
<dbReference type="EMDB" id="EMD-37990"/>
<dbReference type="SMR" id="O95619"/>
<dbReference type="BioGRID" id="113761">
    <property type="interactions" value="213"/>
</dbReference>
<dbReference type="ComplexPortal" id="CPX-974">
    <property type="entry name" value="SRCAP chromatin remodeling complex"/>
</dbReference>
<dbReference type="ComplexPortal" id="CPX-978">
    <property type="entry name" value="NuA4 histone acetyltransferase complex"/>
</dbReference>
<dbReference type="CORUM" id="O95619"/>
<dbReference type="FunCoup" id="O95619">
    <property type="interactions" value="2664"/>
</dbReference>
<dbReference type="IntAct" id="O95619">
    <property type="interactions" value="117"/>
</dbReference>
<dbReference type="MINT" id="O95619"/>
<dbReference type="STRING" id="9606.ENSP00000247843"/>
<dbReference type="BindingDB" id="O95619"/>
<dbReference type="ChEMBL" id="CHEMBL4296266"/>
<dbReference type="GlyGen" id="O95619">
    <property type="glycosylation" value="1 site, 1 O-linked glycan (1 site)"/>
</dbReference>
<dbReference type="iPTMnet" id="O95619"/>
<dbReference type="MetOSite" id="O95619"/>
<dbReference type="PhosphoSitePlus" id="O95619"/>
<dbReference type="BioMuta" id="YEATS4"/>
<dbReference type="jPOST" id="O95619"/>
<dbReference type="MassIVE" id="O95619"/>
<dbReference type="PaxDb" id="9606-ENSP00000247843"/>
<dbReference type="PeptideAtlas" id="O95619"/>
<dbReference type="ProteomicsDB" id="50951"/>
<dbReference type="Pumba" id="O95619"/>
<dbReference type="Antibodypedia" id="16961">
    <property type="antibodies" value="392 antibodies from 32 providers"/>
</dbReference>
<dbReference type="DNASU" id="8089"/>
<dbReference type="Ensembl" id="ENST00000247843.7">
    <property type="protein sequence ID" value="ENSP00000247843.2"/>
    <property type="gene ID" value="ENSG00000127337.7"/>
</dbReference>
<dbReference type="GeneID" id="8089"/>
<dbReference type="KEGG" id="hsa:8089"/>
<dbReference type="MANE-Select" id="ENST00000247843.7">
    <property type="protein sequence ID" value="ENSP00000247843.2"/>
    <property type="RefSeq nucleotide sequence ID" value="NM_006530.4"/>
    <property type="RefSeq protein sequence ID" value="NP_006521.1"/>
</dbReference>
<dbReference type="UCSC" id="uc001sux.4">
    <property type="organism name" value="human"/>
</dbReference>
<dbReference type="AGR" id="HGNC:24859"/>
<dbReference type="CTD" id="8089"/>
<dbReference type="DisGeNET" id="8089"/>
<dbReference type="GeneCards" id="YEATS4"/>
<dbReference type="HGNC" id="HGNC:24859">
    <property type="gene designation" value="YEATS4"/>
</dbReference>
<dbReference type="HPA" id="ENSG00000127337">
    <property type="expression patterns" value="Low tissue specificity"/>
</dbReference>
<dbReference type="MIM" id="602116">
    <property type="type" value="gene"/>
</dbReference>
<dbReference type="neXtProt" id="NX_O95619"/>
<dbReference type="OpenTargets" id="ENSG00000127337"/>
<dbReference type="PharmGKB" id="PA134992686"/>
<dbReference type="VEuPathDB" id="HostDB:ENSG00000127337"/>
<dbReference type="eggNOG" id="KOG3149">
    <property type="taxonomic scope" value="Eukaryota"/>
</dbReference>
<dbReference type="GeneTree" id="ENSGT00940000155811"/>
<dbReference type="HOGENOM" id="CLU_051385_3_0_1"/>
<dbReference type="InParanoid" id="O95619"/>
<dbReference type="OMA" id="VKPYHNE"/>
<dbReference type="OrthoDB" id="16041at2759"/>
<dbReference type="PAN-GO" id="O95619">
    <property type="GO annotations" value="5 GO annotations based on evolutionary models"/>
</dbReference>
<dbReference type="PhylomeDB" id="O95619"/>
<dbReference type="PathwayCommons" id="O95619"/>
<dbReference type="Reactome" id="R-HSA-3214847">
    <property type="pathway name" value="HATs acetylate histones"/>
</dbReference>
<dbReference type="Reactome" id="R-HSA-8866907">
    <property type="pathway name" value="Activation of the TFAP2 (AP-2) family of transcription factors"/>
</dbReference>
<dbReference type="SignaLink" id="O95619"/>
<dbReference type="SIGNOR" id="O95619"/>
<dbReference type="BioGRID-ORCS" id="8089">
    <property type="hits" value="587 hits in 1168 CRISPR screens"/>
</dbReference>
<dbReference type="ChiTaRS" id="YEATS4">
    <property type="organism name" value="human"/>
</dbReference>
<dbReference type="GenomeRNAi" id="8089"/>
<dbReference type="Pharos" id="O95619">
    <property type="development level" value="Tbio"/>
</dbReference>
<dbReference type="PRO" id="PR:O95619"/>
<dbReference type="Proteomes" id="UP000005640">
    <property type="component" value="Chromosome 12"/>
</dbReference>
<dbReference type="RNAct" id="O95619">
    <property type="molecule type" value="protein"/>
</dbReference>
<dbReference type="Bgee" id="ENSG00000127337">
    <property type="expression patterns" value="Expressed in oocyte and 193 other cell types or tissues"/>
</dbReference>
<dbReference type="ExpressionAtlas" id="O95619">
    <property type="expression patterns" value="baseline and differential"/>
</dbReference>
<dbReference type="GO" id="GO:0035267">
    <property type="term" value="C:NuA4 histone acetyltransferase complex"/>
    <property type="evidence" value="ECO:0000314"/>
    <property type="project" value="UniProtKB"/>
</dbReference>
<dbReference type="GO" id="GO:0016363">
    <property type="term" value="C:nuclear matrix"/>
    <property type="evidence" value="ECO:0000303"/>
    <property type="project" value="UniProtKB"/>
</dbReference>
<dbReference type="GO" id="GO:0031965">
    <property type="term" value="C:nuclear membrane"/>
    <property type="evidence" value="ECO:0000314"/>
    <property type="project" value="HPA"/>
</dbReference>
<dbReference type="GO" id="GO:0005654">
    <property type="term" value="C:nucleoplasm"/>
    <property type="evidence" value="ECO:0000314"/>
    <property type="project" value="UniProtKB"/>
</dbReference>
<dbReference type="GO" id="GO:0000786">
    <property type="term" value="C:nucleosome"/>
    <property type="evidence" value="ECO:0000314"/>
    <property type="project" value="ComplexPortal"/>
</dbReference>
<dbReference type="GO" id="GO:0005634">
    <property type="term" value="C:nucleus"/>
    <property type="evidence" value="ECO:0000314"/>
    <property type="project" value="UniProtKB"/>
</dbReference>
<dbReference type="GO" id="GO:0042393">
    <property type="term" value="F:histone binding"/>
    <property type="evidence" value="ECO:0000318"/>
    <property type="project" value="GO_Central"/>
</dbReference>
<dbReference type="GO" id="GO:0140044">
    <property type="term" value="F:histone H3K18ac reader activity"/>
    <property type="evidence" value="ECO:0000314"/>
    <property type="project" value="UniProtKB"/>
</dbReference>
<dbReference type="GO" id="GO:0140119">
    <property type="term" value="F:histone H3K27ac reader activity"/>
    <property type="evidence" value="ECO:0000314"/>
    <property type="project" value="UniProtKB"/>
</dbReference>
<dbReference type="GO" id="GO:0005200">
    <property type="term" value="F:structural constituent of cytoskeleton"/>
    <property type="evidence" value="ECO:0000303"/>
    <property type="project" value="UniProtKB"/>
</dbReference>
<dbReference type="GO" id="GO:0006338">
    <property type="term" value="P:chromatin remodeling"/>
    <property type="evidence" value="ECO:0000318"/>
    <property type="project" value="GO_Central"/>
</dbReference>
<dbReference type="GO" id="GO:0000278">
    <property type="term" value="P:mitotic cell cycle"/>
    <property type="evidence" value="ECO:0000303"/>
    <property type="project" value="UniProtKB"/>
</dbReference>
<dbReference type="GO" id="GO:0045893">
    <property type="term" value="P:positive regulation of DNA-templated transcription"/>
    <property type="evidence" value="ECO:0000303"/>
    <property type="project" value="UniProtKB"/>
</dbReference>
<dbReference type="GO" id="GO:1905168">
    <property type="term" value="P:positive regulation of double-strand break repair via homologous recombination"/>
    <property type="evidence" value="ECO:0000314"/>
    <property type="project" value="ComplexPortal"/>
</dbReference>
<dbReference type="GO" id="GO:0042981">
    <property type="term" value="P:regulation of apoptotic process"/>
    <property type="evidence" value="ECO:0000303"/>
    <property type="project" value="ComplexPortal"/>
</dbReference>
<dbReference type="GO" id="GO:0051726">
    <property type="term" value="P:regulation of cell cycle"/>
    <property type="evidence" value="ECO:0000315"/>
    <property type="project" value="ComplexPortal"/>
</dbReference>
<dbReference type="GO" id="GO:0006355">
    <property type="term" value="P:regulation of DNA-templated transcription"/>
    <property type="evidence" value="ECO:0000303"/>
    <property type="project" value="ComplexPortal"/>
</dbReference>
<dbReference type="GO" id="GO:2000779">
    <property type="term" value="P:regulation of double-strand break repair"/>
    <property type="evidence" value="ECO:0000303"/>
    <property type="project" value="ComplexPortal"/>
</dbReference>
<dbReference type="GO" id="GO:0006357">
    <property type="term" value="P:regulation of transcription by RNA polymerase II"/>
    <property type="evidence" value="ECO:0000318"/>
    <property type="project" value="GO_Central"/>
</dbReference>
<dbReference type="CDD" id="cd16909">
    <property type="entry name" value="YEATS_GAS41_like"/>
    <property type="match status" value="1"/>
</dbReference>
<dbReference type="FunFam" id="2.60.40.1970:FF:000002">
    <property type="entry name" value="YEATS domain-containing protein 4"/>
    <property type="match status" value="1"/>
</dbReference>
<dbReference type="Gene3D" id="2.60.40.1970">
    <property type="entry name" value="YEATS domain"/>
    <property type="match status" value="1"/>
</dbReference>
<dbReference type="InterPro" id="IPR038704">
    <property type="entry name" value="YEAST_sf"/>
</dbReference>
<dbReference type="InterPro" id="IPR005033">
    <property type="entry name" value="YEATS"/>
</dbReference>
<dbReference type="InterPro" id="IPR055129">
    <property type="entry name" value="YEATS_dom"/>
</dbReference>
<dbReference type="PANTHER" id="PTHR47573">
    <property type="entry name" value="PROTEIN AF-9 HOMOLOG"/>
    <property type="match status" value="1"/>
</dbReference>
<dbReference type="PANTHER" id="PTHR47573:SF1">
    <property type="entry name" value="PROTEIN AF-9 HOMOLOG"/>
    <property type="match status" value="1"/>
</dbReference>
<dbReference type="Pfam" id="PF03366">
    <property type="entry name" value="YEATS"/>
    <property type="match status" value="1"/>
</dbReference>
<dbReference type="PROSITE" id="PS51037">
    <property type="entry name" value="YEATS"/>
    <property type="match status" value="1"/>
</dbReference>
<comment type="function">
    <text evidence="1 8 9 11 12 13 14">Chromatin reader component of the NuA4 histone acetyltransferase (HAT) complex, a complex involved in transcriptional activation of select genes principally by acetylation of nucleosomal histones H4 and H2A (PubMed:12963728, PubMed:14966270). Specifically recognizes and binds acylated histone H3, with a preference for histone H3 diacetylated at 'Lys-18' and 'Lys-27' (H3K18ac and H3K27ac) or histone H3 diacetylated at 'Lys-14' and 'Lys-27' (H3K14ac and H3K27ac) (PubMed:29437725, PubMed:29900004, PubMed:30071723). Also able to recognize and bind crotonylated histone H3 (PubMed:30071723). May also recognize and bind histone H3 succinylated at 'Lys-122' (H3K122succ); additional evidences are however required to confirm this result in vivo (PubMed:29463709). Plays a key role in histone variant H2AZ1/H2A.Z deposition into specific chromatin regions: recognizes and binds H3K14ac and H3K27ac on the promoters of actively transcribed genes and recruits NuA4-related complex to deposit H2AZ1/H2A.Z (PubMed:29437725). H2AZ1/H2A.Z deposition is required for maintenance of embryonic stem cell (By similarity).</text>
</comment>
<comment type="subunit">
    <text evidence="4 5 6 7 8 9 11">Component of numerous complexes with chromatin remodeling and histone acetyltransferase activity (PubMed:12963728, PubMed:14966270). Component of the NuA4 histone acetyltransferase complex which contains the catalytic subunit KAT5/TIP60 and the subunits EP400, TRRAP/PAF400, BRD8/SMAP, EPC1, DMAP1/DNMAP1, RUVBL1/TIP49, RUVBL2, ING3, actin, ACTL6A/BAF53A, MORF4L1/MRG15, MORF4L2/MRGX, MRGBP, YEATS4/GAS41, VPS72/YL1 and MEAF6 (PubMed:12963728, PubMed:14966270). The NuA4 complex interacts with MYC and the adenovirus E1A protein (PubMed:12963728, PubMed:14966270). Component of a NuA4-related complex which contains EP400, TRRAP/PAF400, SRCAP, BRD8/SMAP, EPC1, DMAP1/DNMAP1, RUVBL1/TIP49, RUVBL2, actin, ACTL6A/BAF53A, VPS72 and YEATS4/GAS41 (PubMed:14966270, PubMed:29437725). Interacts with MLLT10/AF10 (PubMed:11756182). Also interacts with the SWI/SNF component SMARCB1/BAF47, TACC1 and TACC2, and the nuclear matrix protein NUMA1 (PubMed:10913114, PubMed:11756182, PubMed:11903063, PubMed:12620397).</text>
</comment>
<comment type="interaction">
    <interactant intactId="EBI-399269">
        <id>O95619</id>
    </interactant>
    <interactant intactId="EBI-13280688">
        <id>Q8NFD2</id>
        <label>ANKK1</label>
    </interactant>
    <organismsDiffer>false</organismsDiffer>
    <experiments>4</experiments>
</comment>
<comment type="interaction">
    <interactant intactId="EBI-399269">
        <id>O95619</id>
    </interactant>
    <interactant intactId="EBI-624237">
        <id>O75410</id>
        <label>TACC1</label>
    </interactant>
    <organismsDiffer>false</organismsDiffer>
    <experiments>6</experiments>
</comment>
<comment type="interaction">
    <interactant intactId="EBI-399269">
        <id>O95619</id>
    </interactant>
    <interactant intactId="EBI-12123928">
        <id>P09493-10</id>
        <label>TPM1</label>
    </interactant>
    <organismsDiffer>false</organismsDiffer>
    <experiments>3</experiments>
</comment>
<comment type="subcellular location">
    <subcellularLocation>
        <location evidence="3 4 10">Nucleus</location>
    </subcellularLocation>
</comment>
<comment type="tissue specificity">
    <text evidence="4">Expressed in brain, heart, kidney, liver, lung, pancreas, placenta and skeletal muscle.</text>
</comment>
<comment type="domain">
    <text evidence="11">The YEATS domain specifically recognizes and binds acylated histones, with a preference for histone H3 diacetylated at 'Lys-14' and 'Lys-27' (H3K14ac and H3K27ac).</text>
</comment>
<comment type="caution">
    <text evidence="12 14">According to a report, recognizes and binds histone H3 succinylated at 'Lys-122' (H3K122succ) (PubMed:29463709). However, another report only observed poor binding with succinylated histone H3 (PubMed:30071723).</text>
</comment>
<comment type="sequence caution" evidence="16">
    <conflict type="erroneous initiation">
        <sequence resource="EMBL-CDS" id="CAC01935"/>
    </conflict>
</comment>
<accession>O95619</accession>
<accession>Q9NQD0</accession>
<reference key="1">
    <citation type="journal article" date="1997" name="Hum. Mol. Genet.">
        <title>Cloning of a novel transcription factor-like gene amplified in human glioma including astrocytoma grade I.</title>
        <authorList>
            <person name="Fischer U."/>
            <person name="Heckel D."/>
            <person name="Michel A."/>
            <person name="Janka M."/>
            <person name="Hulsebos T."/>
            <person name="Meese E."/>
        </authorList>
    </citation>
    <scope>NUCLEOTIDE SEQUENCE [MRNA]</scope>
</reference>
<reference key="2">
    <citation type="journal article" date="2000" name="J. Biol. Chem.">
        <title>GAS41, a highly conserved protein in eukaryotic nuclei, binds to NuMA.</title>
        <authorList>
            <person name="Harborth J."/>
            <person name="Weber K."/>
            <person name="Osborn M."/>
        </authorList>
    </citation>
    <scope>NUCLEOTIDE SEQUENCE [MRNA]</scope>
    <scope>SUBCELLULAR LOCATION</scope>
    <scope>INTERACTION WITH NUMA1</scope>
    <scope>TISSUE SPECIFICITY</scope>
</reference>
<reference key="3">
    <citation type="journal article" date="2004" name="Nat. Genet.">
        <title>Complete sequencing and characterization of 21,243 full-length human cDNAs.</title>
        <authorList>
            <person name="Ota T."/>
            <person name="Suzuki Y."/>
            <person name="Nishikawa T."/>
            <person name="Otsuki T."/>
            <person name="Sugiyama T."/>
            <person name="Irie R."/>
            <person name="Wakamatsu A."/>
            <person name="Hayashi K."/>
            <person name="Sato H."/>
            <person name="Nagai K."/>
            <person name="Kimura K."/>
            <person name="Makita H."/>
            <person name="Sekine M."/>
            <person name="Obayashi M."/>
            <person name="Nishi T."/>
            <person name="Shibahara T."/>
            <person name="Tanaka T."/>
            <person name="Ishii S."/>
            <person name="Yamamoto J."/>
            <person name="Saito K."/>
            <person name="Kawai Y."/>
            <person name="Isono Y."/>
            <person name="Nakamura Y."/>
            <person name="Nagahari K."/>
            <person name="Murakami K."/>
            <person name="Yasuda T."/>
            <person name="Iwayanagi T."/>
            <person name="Wagatsuma M."/>
            <person name="Shiratori A."/>
            <person name="Sudo H."/>
            <person name="Hosoiri T."/>
            <person name="Kaku Y."/>
            <person name="Kodaira H."/>
            <person name="Kondo H."/>
            <person name="Sugawara M."/>
            <person name="Takahashi M."/>
            <person name="Kanda K."/>
            <person name="Yokoi T."/>
            <person name="Furuya T."/>
            <person name="Kikkawa E."/>
            <person name="Omura Y."/>
            <person name="Abe K."/>
            <person name="Kamihara K."/>
            <person name="Katsuta N."/>
            <person name="Sato K."/>
            <person name="Tanikawa M."/>
            <person name="Yamazaki M."/>
            <person name="Ninomiya K."/>
            <person name="Ishibashi T."/>
            <person name="Yamashita H."/>
            <person name="Murakawa K."/>
            <person name="Fujimori K."/>
            <person name="Tanai H."/>
            <person name="Kimata M."/>
            <person name="Watanabe M."/>
            <person name="Hiraoka S."/>
            <person name="Chiba Y."/>
            <person name="Ishida S."/>
            <person name="Ono Y."/>
            <person name="Takiguchi S."/>
            <person name="Watanabe S."/>
            <person name="Yosida M."/>
            <person name="Hotuta T."/>
            <person name="Kusano J."/>
            <person name="Kanehori K."/>
            <person name="Takahashi-Fujii A."/>
            <person name="Hara H."/>
            <person name="Tanase T.-O."/>
            <person name="Nomura Y."/>
            <person name="Togiya S."/>
            <person name="Komai F."/>
            <person name="Hara R."/>
            <person name="Takeuchi K."/>
            <person name="Arita M."/>
            <person name="Imose N."/>
            <person name="Musashino K."/>
            <person name="Yuuki H."/>
            <person name="Oshima A."/>
            <person name="Sasaki N."/>
            <person name="Aotsuka S."/>
            <person name="Yoshikawa Y."/>
            <person name="Matsunawa H."/>
            <person name="Ichihara T."/>
            <person name="Shiohata N."/>
            <person name="Sano S."/>
            <person name="Moriya S."/>
            <person name="Momiyama H."/>
            <person name="Satoh N."/>
            <person name="Takami S."/>
            <person name="Terashima Y."/>
            <person name="Suzuki O."/>
            <person name="Nakagawa S."/>
            <person name="Senoh A."/>
            <person name="Mizoguchi H."/>
            <person name="Goto Y."/>
            <person name="Shimizu F."/>
            <person name="Wakebe H."/>
            <person name="Hishigaki H."/>
            <person name="Watanabe T."/>
            <person name="Sugiyama A."/>
            <person name="Takemoto M."/>
            <person name="Kawakami B."/>
            <person name="Yamazaki M."/>
            <person name="Watanabe K."/>
            <person name="Kumagai A."/>
            <person name="Itakura S."/>
            <person name="Fukuzumi Y."/>
            <person name="Fujimori Y."/>
            <person name="Komiyama M."/>
            <person name="Tashiro H."/>
            <person name="Tanigami A."/>
            <person name="Fujiwara T."/>
            <person name="Ono T."/>
            <person name="Yamada K."/>
            <person name="Fujii Y."/>
            <person name="Ozaki K."/>
            <person name="Hirao M."/>
            <person name="Ohmori Y."/>
            <person name="Kawabata A."/>
            <person name="Hikiji T."/>
            <person name="Kobatake N."/>
            <person name="Inagaki H."/>
            <person name="Ikema Y."/>
            <person name="Okamoto S."/>
            <person name="Okitani R."/>
            <person name="Kawakami T."/>
            <person name="Noguchi S."/>
            <person name="Itoh T."/>
            <person name="Shigeta K."/>
            <person name="Senba T."/>
            <person name="Matsumura K."/>
            <person name="Nakajima Y."/>
            <person name="Mizuno T."/>
            <person name="Morinaga M."/>
            <person name="Sasaki M."/>
            <person name="Togashi T."/>
            <person name="Oyama M."/>
            <person name="Hata H."/>
            <person name="Watanabe M."/>
            <person name="Komatsu T."/>
            <person name="Mizushima-Sugano J."/>
            <person name="Satoh T."/>
            <person name="Shirai Y."/>
            <person name="Takahashi Y."/>
            <person name="Nakagawa K."/>
            <person name="Okumura K."/>
            <person name="Nagase T."/>
            <person name="Nomura N."/>
            <person name="Kikuchi H."/>
            <person name="Masuho Y."/>
            <person name="Yamashita R."/>
            <person name="Nakai K."/>
            <person name="Yada T."/>
            <person name="Nakamura Y."/>
            <person name="Ohara O."/>
            <person name="Isogai T."/>
            <person name="Sugano S."/>
        </authorList>
    </citation>
    <scope>NUCLEOTIDE SEQUENCE [LARGE SCALE MRNA]</scope>
</reference>
<reference key="4">
    <citation type="journal article" date="2004" name="Genome Res.">
        <title>The status, quality, and expansion of the NIH full-length cDNA project: the Mammalian Gene Collection (MGC).</title>
        <authorList>
            <consortium name="The MGC Project Team"/>
        </authorList>
    </citation>
    <scope>NUCLEOTIDE SEQUENCE [LARGE SCALE MRNA]</scope>
</reference>
<reference key="5">
    <citation type="journal article" date="2003" name="J. Biol. Chem.">
        <title>Identification of new subunits of the multiprotein mammalian TRRAP/TIP60-containing histone acetyltransferase complex.</title>
        <authorList>
            <person name="Cai Y."/>
            <person name="Jin J."/>
            <person name="Tomomori-Sato C."/>
            <person name="Sato S."/>
            <person name="Sorokina I."/>
            <person name="Parmely T.J."/>
            <person name="Conaway R.C."/>
            <person name="Conaway J.W."/>
        </authorList>
    </citation>
    <scope>PROTEIN SEQUENCE OF 5-15; 18-32; 56-64; 120-131; 168-178 AND 217-227</scope>
    <scope>FUNCTION</scope>
    <scope>IDENTIFICATION IN NUA4 COMPLEX</scope>
    <scope>IDENTIFICATION BY MASS SPECTROMETRY</scope>
</reference>
<reference key="6">
    <citation type="journal article" date="2002" name="Biochem. J.">
        <title>Interaction of the transforming acidic coiled-coil 1 (TACC1) protein with ch-TOG and GAS41/NuBI1 suggests multiple TACC1-containing protein complexes in human cells.</title>
        <authorList>
            <person name="Lauffart B."/>
            <person name="Howell S.J."/>
            <person name="Tasch J.E."/>
            <person name="Cowell J.K."/>
            <person name="Still I.H."/>
        </authorList>
    </citation>
    <scope>INTERACTION WITH TACC1</scope>
</reference>
<reference key="7">
    <citation type="journal article" date="2002" name="Blood">
        <title>The MLL fusion partner AF10 binds GAS41, a protein that interacts with the human SWI/SNF complex.</title>
        <authorList>
            <person name="Debernardi S."/>
            <person name="Bassini A."/>
            <person name="Jones L.K."/>
            <person name="Chaplin T."/>
            <person name="Linder B."/>
            <person name="de Bruijn D.R.H."/>
            <person name="Meese E."/>
            <person name="Young B.D."/>
        </authorList>
    </citation>
    <scope>INTERACTION WITH MLLT10 AND SMARCB1</scope>
</reference>
<reference key="8">
    <citation type="journal article" date="2003" name="Genomics">
        <title>Molecular cloning, genomic structure and interactions of the putative breast tumor suppressor TACC2.</title>
        <authorList>
            <person name="Lauffart B."/>
            <person name="Gangisetty O."/>
            <person name="Still I.H."/>
        </authorList>
    </citation>
    <scope>INTERACTION WITH TACC2</scope>
</reference>
<reference key="9">
    <citation type="journal article" date="2004" name="Curr. Opin. Genet. Dev.">
        <title>The highly conserved and multifunctional NuA4 HAT complex.</title>
        <authorList>
            <person name="Doyon Y."/>
            <person name="Cote J."/>
        </authorList>
    </citation>
    <scope>REVIEW ON NUA4 COMPLEX</scope>
</reference>
<reference key="10">
    <citation type="journal article" date="2004" name="Mol. Cell. Biol.">
        <title>Structural and functional conservation of the NuA4 histone acetyltransferase complex from yeast to humans.</title>
        <authorList>
            <person name="Doyon Y."/>
            <person name="Selleck W."/>
            <person name="Lane W.S."/>
            <person name="Tan S."/>
            <person name="Cote J."/>
        </authorList>
    </citation>
    <scope>FUNCTION</scope>
    <scope>IDENTIFICATION BY MASS SPECTROMETRY</scope>
    <scope>IDENTIFICATION IN NUA4 COMPLEX</scope>
    <scope>IDENTIFICATION IN NUA4-RELATED SRCAP-CONTAINING COMPLEX</scope>
</reference>
<reference key="11">
    <citation type="journal article" date="2008" name="J. Cell Sci.">
        <title>EML3 is a nuclear microtubule-binding protein required for the correct alignment of chromosomes in metaphase.</title>
        <authorList>
            <person name="Tegha-Dunghu J."/>
            <person name="Neumann B."/>
            <person name="Reber S."/>
            <person name="Krause R."/>
            <person name="Erfle H."/>
            <person name="Walter T."/>
            <person name="Held M."/>
            <person name="Rogers P."/>
            <person name="Hupfeld K."/>
            <person name="Ruppert T."/>
            <person name="Ellenberg J."/>
            <person name="Gruss O.J."/>
        </authorList>
    </citation>
    <scope>SUBCELLULAR LOCATION</scope>
</reference>
<reference key="12">
    <citation type="journal article" date="2011" name="BMC Syst. Biol.">
        <title>Initial characterization of the human central proteome.</title>
        <authorList>
            <person name="Burkard T.R."/>
            <person name="Planyavsky M."/>
            <person name="Kaupe I."/>
            <person name="Breitwieser F.P."/>
            <person name="Buerckstuemmer T."/>
            <person name="Bennett K.L."/>
            <person name="Superti-Furga G."/>
            <person name="Colinge J."/>
        </authorList>
    </citation>
    <scope>IDENTIFICATION BY MASS SPECTROMETRY [LARGE SCALE ANALYSIS]</scope>
</reference>
<reference key="13">
    <citation type="journal article" date="2017" name="Nat. Struct. Mol. Biol.">
        <title>Site-specific mapping of the human SUMO proteome reveals co-modification with phosphorylation.</title>
        <authorList>
            <person name="Hendriks I.A."/>
            <person name="Lyon D."/>
            <person name="Young C."/>
            <person name="Jensen L.J."/>
            <person name="Vertegaal A.C."/>
            <person name="Nielsen M.L."/>
        </authorList>
    </citation>
    <scope>SUMOYLATION [LARGE SCALE ANALYSIS] AT LYS-37</scope>
    <scope>IDENTIFICATION BY MASS SPECTROMETRY [LARGE SCALE ANALYSIS]</scope>
</reference>
<reference key="14">
    <citation type="journal article" date="2018" name="Genes Dev.">
        <title>Recognition of histone acetylation by the GAS41 YEATS domain promotes H2A.Z deposition in non-small cell lung cancer.</title>
        <authorList>
            <person name="Hsu C.C."/>
            <person name="Shi J."/>
            <person name="Yuan C."/>
            <person name="Zhao D."/>
            <person name="Jiang S."/>
            <person name="Lyu J."/>
            <person name="Wang X."/>
            <person name="Li H."/>
            <person name="Wen H."/>
            <person name="Li W."/>
            <person name="Shi X."/>
        </authorList>
    </citation>
    <scope>FUNCTION</scope>
    <scope>IDENTIFICATION IN NUA4-RELATED SRCAP-CONTAINING COMPLEX</scope>
    <scope>DOMAIN</scope>
    <scope>MUTAGENESIS OF TYR-74 AND TRP-93</scope>
</reference>
<reference evidence="18 19" key="15">
    <citation type="journal article" date="2018" name="ACS Chem. Biol.">
        <title>GAS41 recognizes diacetylated histone H3 through a bivalent binding mode.</title>
        <authorList>
            <person name="Cho H.J."/>
            <person name="Li H."/>
            <person name="Linhares B.M."/>
            <person name="Kim E."/>
            <person name="Ndoj J."/>
            <person name="Miao H."/>
            <person name="Grembecka J."/>
            <person name="Cierpicki T."/>
        </authorList>
    </citation>
    <scope>X-RAY CRYSTALLOGRAPHY (2.10 ANGSTROMS) OF 1-148 IN COMPLEX WITH ACETYLATED HISTONE H3</scope>
    <scope>FUNCTION</scope>
</reference>
<reference evidence="20" key="16">
    <citation type="journal article" date="2018" name="Cell Discov.">
        <title>Gas41 links histone acetylation to H2A.Z deposition and maintenance of embryonic stem cell identity.</title>
        <authorList>
            <person name="Hsu C.C."/>
            <person name="Zhao D."/>
            <person name="Shi J."/>
            <person name="Peng D."/>
            <person name="Guan H."/>
            <person name="Li Y."/>
            <person name="Huang Y."/>
            <person name="Wen H."/>
            <person name="Li W."/>
            <person name="Li H."/>
            <person name="Shi X."/>
        </authorList>
    </citation>
    <scope>X-RAY CRYSTALLOGRAPHY (2.10 ANGSTROMS) OF 15-159 IN COMPLEX WITH ACETYLATED HISTONE H3</scope>
    <scope>FUNCTION</scope>
</reference>
<reference evidence="21" key="17">
    <citation type="journal article" date="2018" name="Proc. Natl. Acad. Sci. U.S.A.">
        <title>Identification of the YEATS domain of GAS41 as a pH-dependent reader of histone succinylation.</title>
        <authorList>
            <person name="Wang Y."/>
            <person name="Jin J."/>
            <person name="Chung M.W.H."/>
            <person name="Feng L."/>
            <person name="Sun H."/>
            <person name="Hao Q."/>
        </authorList>
    </citation>
    <scope>X-RAY CRYSTALLOGRAPHY (2.61 ANGSTROMS) OF 21-160</scope>
    <scope>FUNCTION</scope>
    <scope>MUTAGENESIS OF HIS-43</scope>
</reference>
<feature type="chain" id="PRO_0000066204" description="YEATS domain-containing protein 4">
    <location>
        <begin position="1"/>
        <end position="227"/>
    </location>
</feature>
<feature type="domain" description="YEATS" evidence="3">
    <location>
        <begin position="15"/>
        <end position="158"/>
    </location>
</feature>
<feature type="region of interest" description="Diacetylated histone H3 binding" evidence="13 14 19 20">
    <location>
        <begin position="93"/>
        <end position="97"/>
    </location>
</feature>
<feature type="region of interest" description="Interaction with MLLT10" evidence="5">
    <location>
        <begin position="163"/>
        <end position="227"/>
    </location>
</feature>
<feature type="region of interest" description="Interaction with TACC1" evidence="6">
    <location>
        <begin position="168"/>
        <end position="227"/>
    </location>
</feature>
<feature type="coiled-coil region" evidence="2">
    <location>
        <begin position="178"/>
        <end position="226"/>
    </location>
</feature>
<feature type="site" description="Interacts with diacetylated histone H3" evidence="13 14 19 20">
    <location>
        <position position="73"/>
    </location>
</feature>
<feature type="cross-link" description="Glycyl lysine isopeptide (Lys-Gly) (interchain with G-Cter in SUMO2)" evidence="22">
    <location>
        <position position="37"/>
    </location>
</feature>
<feature type="mutagenesis site" description="Impaired binding to histone H3 succinylated at 'Lys-122' (H3K122succ)." evidence="12">
    <original>H</original>
    <variation>A</variation>
    <location>
        <position position="43"/>
    </location>
</feature>
<feature type="mutagenesis site" description="Impaired binding to histone H3 diacetylated at 'Lys-14' and 'Lys-27' (H3K14ac and H3K27ac), and subsequent deposition of histone H2AZ1/H2A.Z into specific chromatin regions; when associated with A-93." evidence="11">
    <original>Y</original>
    <variation>A</variation>
    <location>
        <position position="74"/>
    </location>
</feature>
<feature type="mutagenesis site" description="Impaired binding to histone H3 diacetylated at 'Lys-14' and 'Lys-27' (H3K14ac and H3K27ac), and subsequent deposition of histone H2AZ1/H2A.Z into specific chromatin regions; when associated with A-74." evidence="11">
    <original>W</original>
    <variation>A</variation>
    <location>
        <position position="93"/>
    </location>
</feature>
<feature type="sequence conflict" description="In Ref. 2; CAC01935." evidence="16" ref="2">
    <original>R</original>
    <variation>C</variation>
    <location>
        <position position="159"/>
    </location>
</feature>
<feature type="strand" evidence="25">
    <location>
        <begin position="20"/>
        <end position="33"/>
    </location>
</feature>
<feature type="turn" evidence="25">
    <location>
        <begin position="39"/>
        <end position="41"/>
    </location>
</feature>
<feature type="strand" evidence="25">
    <location>
        <begin position="45"/>
        <end position="56"/>
    </location>
</feature>
<feature type="helix" evidence="25">
    <location>
        <begin position="59"/>
        <end position="61"/>
    </location>
</feature>
<feature type="strand" evidence="25">
    <location>
        <begin position="63"/>
        <end position="69"/>
    </location>
</feature>
<feature type="strand" evidence="25">
    <location>
        <begin position="74"/>
        <end position="76"/>
    </location>
</feature>
<feature type="strand" evidence="25">
    <location>
        <begin position="78"/>
        <end position="81"/>
    </location>
</feature>
<feature type="strand" evidence="25">
    <location>
        <begin position="83"/>
        <end position="93"/>
    </location>
</feature>
<feature type="strand" evidence="25">
    <location>
        <begin position="97"/>
        <end position="106"/>
    </location>
</feature>
<feature type="strand" evidence="25">
    <location>
        <begin position="112"/>
        <end position="117"/>
    </location>
</feature>
<feature type="helix" evidence="25">
    <location>
        <begin position="124"/>
        <end position="128"/>
    </location>
</feature>
<feature type="strand" evidence="24">
    <location>
        <begin position="130"/>
        <end position="132"/>
    </location>
</feature>
<feature type="strand" evidence="25">
    <location>
        <begin position="133"/>
        <end position="146"/>
    </location>
</feature>
<feature type="helix" evidence="25">
    <location>
        <begin position="149"/>
        <end position="156"/>
    </location>
</feature>
<feature type="helix" evidence="23">
    <location>
        <begin position="159"/>
        <end position="161"/>
    </location>
</feature>
<name>YETS4_HUMAN</name>
<keyword id="KW-0002">3D-structure</keyword>
<keyword id="KW-0156">Chromatin regulator</keyword>
<keyword id="KW-0175">Coiled coil</keyword>
<keyword id="KW-0903">Direct protein sequencing</keyword>
<keyword id="KW-0341">Growth regulation</keyword>
<keyword id="KW-1017">Isopeptide bond</keyword>
<keyword id="KW-0539">Nucleus</keyword>
<keyword id="KW-1267">Proteomics identification</keyword>
<keyword id="KW-1185">Reference proteome</keyword>
<keyword id="KW-0804">Transcription</keyword>
<keyword id="KW-0805">Transcription regulation</keyword>
<keyword id="KW-0832">Ubl conjugation</keyword>
<gene>
    <name evidence="17" type="primary">YEATS4</name>
    <name evidence="15" type="synonym">GAS41</name>
</gene>
<sequence length="227" mass="26499">MFKRMAEFGPDSGGRVKGVTIVKPIVYGNVARYFGKKREEDGHTHQWTVYVKPYRNEDMSAYVKKIQFKLHESYGNPLRVVTKPPYEITETGWGEFEIIIKIFFIDPNERPVTLYHLLKLFQSDTNAMLGKKTVVSEFYDEMIFQDPTAMMQQLLTTSRQLTLGAYKHETEFAELEVKTREKLEAAKKKTSFEIAELKERLKASRETINCLKNEIRKLEEDDQAKDI</sequence>
<protein>
    <recommendedName>
        <fullName evidence="16">YEATS domain-containing protein 4</fullName>
    </recommendedName>
    <alternativeName>
        <fullName evidence="15">Glioma-amplified sequence 41</fullName>
        <shortName evidence="15">Gas41</shortName>
    </alternativeName>
    <alternativeName>
        <fullName>NuMA-binding protein 1</fullName>
        <shortName>NuBI-1</shortName>
        <shortName>NuBI1</shortName>
    </alternativeName>
</protein>
<organism>
    <name type="scientific">Homo sapiens</name>
    <name type="common">Human</name>
    <dbReference type="NCBI Taxonomy" id="9606"/>
    <lineage>
        <taxon>Eukaryota</taxon>
        <taxon>Metazoa</taxon>
        <taxon>Chordata</taxon>
        <taxon>Craniata</taxon>
        <taxon>Vertebrata</taxon>
        <taxon>Euteleostomi</taxon>
        <taxon>Mammalia</taxon>
        <taxon>Eutheria</taxon>
        <taxon>Euarchontoglires</taxon>
        <taxon>Primates</taxon>
        <taxon>Haplorrhini</taxon>
        <taxon>Catarrhini</taxon>
        <taxon>Hominidae</taxon>
        <taxon>Homo</taxon>
    </lineage>
</organism>
<proteinExistence type="evidence at protein level"/>